<comment type="function">
    <text evidence="2">Part of the ABC transporter complex DrrABC involved in doxorubicin resistance. Responsible for energy coupling to the transport system. Binds ATP.</text>
</comment>
<comment type="activity regulation">
    <text evidence="2">Inhibited by reserpine.</text>
</comment>
<comment type="subunit">
    <text evidence="3">The complex is composed of two ATP-binding proteins (DrrA) and two transmembrane proteins (DrrB and DrrC).</text>
</comment>
<comment type="subcellular location">
    <subcellularLocation>
        <location evidence="4">Cell membrane</location>
        <topology evidence="4">Peripheral membrane protein</topology>
        <orientation evidence="4">Cytoplasmic side</orientation>
    </subcellularLocation>
</comment>
<comment type="similarity">
    <text evidence="3">Belongs to the ABC transporter superfamily. Drug exporter-1 (DrugE1) (TC 3.A.1.105) family.</text>
</comment>
<evidence type="ECO:0000255" key="1">
    <source>
        <dbReference type="PROSITE-ProRule" id="PRU00434"/>
    </source>
</evidence>
<evidence type="ECO:0000269" key="2">
    <source>
    </source>
</evidence>
<evidence type="ECO:0000305" key="3"/>
<evidence type="ECO:0000305" key="4">
    <source>
    </source>
</evidence>
<organism>
    <name type="scientific">Mycobacterium tuberculosis (strain ATCC 25618 / H37Rv)</name>
    <dbReference type="NCBI Taxonomy" id="83332"/>
    <lineage>
        <taxon>Bacteria</taxon>
        <taxon>Bacillati</taxon>
        <taxon>Actinomycetota</taxon>
        <taxon>Actinomycetes</taxon>
        <taxon>Mycobacteriales</taxon>
        <taxon>Mycobacteriaceae</taxon>
        <taxon>Mycobacterium</taxon>
        <taxon>Mycobacterium tuberculosis complex</taxon>
    </lineage>
</organism>
<accession>P9WQL9</accession>
<accession>L0TCP0</accession>
<accession>P96205</accession>
<accession>Q7D6E8</accession>
<protein>
    <recommendedName>
        <fullName>Doxorubicin resistance ATP-binding protein DrrA</fullName>
        <ecNumber>7.6.2.-</ecNumber>
    </recommendedName>
</protein>
<name>DRRA_MYCTU</name>
<keyword id="KW-0046">Antibiotic resistance</keyword>
<keyword id="KW-0067">ATP-binding</keyword>
<keyword id="KW-1003">Cell membrane</keyword>
<keyword id="KW-0472">Membrane</keyword>
<keyword id="KW-0547">Nucleotide-binding</keyword>
<keyword id="KW-1185">Reference proteome</keyword>
<keyword id="KW-1278">Translocase</keyword>
<keyword id="KW-0813">Transport</keyword>
<reference key="1">
    <citation type="journal article" date="1998" name="Nature">
        <title>Deciphering the biology of Mycobacterium tuberculosis from the complete genome sequence.</title>
        <authorList>
            <person name="Cole S.T."/>
            <person name="Brosch R."/>
            <person name="Parkhill J."/>
            <person name="Garnier T."/>
            <person name="Churcher C.M."/>
            <person name="Harris D.E."/>
            <person name="Gordon S.V."/>
            <person name="Eiglmeier K."/>
            <person name="Gas S."/>
            <person name="Barry C.E. III"/>
            <person name="Tekaia F."/>
            <person name="Badcock K."/>
            <person name="Basham D."/>
            <person name="Brown D."/>
            <person name="Chillingworth T."/>
            <person name="Connor R."/>
            <person name="Davies R.M."/>
            <person name="Devlin K."/>
            <person name="Feltwell T."/>
            <person name="Gentles S."/>
            <person name="Hamlin N."/>
            <person name="Holroyd S."/>
            <person name="Hornsby T."/>
            <person name="Jagels K."/>
            <person name="Krogh A."/>
            <person name="McLean J."/>
            <person name="Moule S."/>
            <person name="Murphy L.D."/>
            <person name="Oliver S."/>
            <person name="Osborne J."/>
            <person name="Quail M.A."/>
            <person name="Rajandream M.A."/>
            <person name="Rogers J."/>
            <person name="Rutter S."/>
            <person name="Seeger K."/>
            <person name="Skelton S."/>
            <person name="Squares S."/>
            <person name="Squares R."/>
            <person name="Sulston J.E."/>
            <person name="Taylor K."/>
            <person name="Whitehead S."/>
            <person name="Barrell B.G."/>
        </authorList>
    </citation>
    <scope>NUCLEOTIDE SEQUENCE [LARGE SCALE GENOMIC DNA]</scope>
    <source>
        <strain>ATCC 25618 / H37Rv</strain>
    </source>
</reference>
<reference key="2">
    <citation type="journal article" date="2002" name="Biochem. J.">
        <title>Overexpression and functional characterization of an ABC (ATP-binding cassette) transporter encoded by the genes drrA and drrB of Mycobacterium tuberculosis.</title>
        <authorList>
            <person name="Choudhuri B.S."/>
            <person name="Bhakta S."/>
            <person name="Barik R."/>
            <person name="Basu J."/>
            <person name="Kundu M."/>
            <person name="Chakrabarti P."/>
        </authorList>
    </citation>
    <scope>FUNCTION IN DOXORUBICIN RESISTANCE</scope>
    <scope>ATP-BINDING</scope>
    <scope>ACTIVITY REGULATION</scope>
    <scope>SUBCELLULAR LOCATION</scope>
</reference>
<reference key="3">
    <citation type="journal article" date="2011" name="Mol. Cell. Proteomics">
        <title>Proteogenomic analysis of Mycobacterium tuberculosis by high resolution mass spectrometry.</title>
        <authorList>
            <person name="Kelkar D.S."/>
            <person name="Kumar D."/>
            <person name="Kumar P."/>
            <person name="Balakrishnan L."/>
            <person name="Muthusamy B."/>
            <person name="Yadav A.K."/>
            <person name="Shrivastava P."/>
            <person name="Marimuthu A."/>
            <person name="Anand S."/>
            <person name="Sundaram H."/>
            <person name="Kingsbury R."/>
            <person name="Harsha H.C."/>
            <person name="Nair B."/>
            <person name="Prasad T.S."/>
            <person name="Chauhan D.S."/>
            <person name="Katoch K."/>
            <person name="Katoch V.M."/>
            <person name="Kumar P."/>
            <person name="Chaerkady R."/>
            <person name="Ramachandran S."/>
            <person name="Dash D."/>
            <person name="Pandey A."/>
        </authorList>
    </citation>
    <scope>IDENTIFICATION BY MASS SPECTROMETRY [LARGE SCALE ANALYSIS]</scope>
    <source>
        <strain>ATCC 25618 / H37Rv</strain>
    </source>
</reference>
<sequence length="331" mass="35818">MRNDDMAVVVNGVRKTYGKGKIVALDDVSFKVRRGEVIGLLGPNGAGKTTMVDILSTLTRPDAGSAIIAGYDVVSEPAGVRRSIMVTGQQVAVDDALSGEQNLVLFGRLWGLSKSAARKRAAELLEQFSLVHAGKRRVGTYSGGMRRRIDIACGLVVQPQVAFLDEPTTGLDPRSRQAIWDLVASFKKLGIATLLTTQYLEEADALSDRIILIDHGIIIAEGTANELKHRAGDTFCEIVPRDLKDLDAIVAALGSLLPEHHRAMLTPDSDRITMPAPDGIRMLVEAARRIDEARIELADIALRRPSLDHVFLAMTTDPTESLTHLVSGSAR</sequence>
<feature type="chain" id="PRO_0000393225" description="Doxorubicin resistance ATP-binding protein DrrA">
    <location>
        <begin position="1"/>
        <end position="331"/>
    </location>
</feature>
<feature type="domain" description="ABC transporter" evidence="1">
    <location>
        <begin position="8"/>
        <end position="240"/>
    </location>
</feature>
<feature type="binding site" evidence="1">
    <location>
        <begin position="42"/>
        <end position="49"/>
    </location>
    <ligand>
        <name>ATP</name>
        <dbReference type="ChEBI" id="CHEBI:30616"/>
    </ligand>
</feature>
<dbReference type="EC" id="7.6.2.-"/>
<dbReference type="EMBL" id="AL123456">
    <property type="protein sequence ID" value="CCP45739.1"/>
    <property type="molecule type" value="Genomic_DNA"/>
</dbReference>
<dbReference type="PIR" id="D70984">
    <property type="entry name" value="D70984"/>
</dbReference>
<dbReference type="RefSeq" id="NP_217452.1">
    <property type="nucleotide sequence ID" value="NC_000962.3"/>
</dbReference>
<dbReference type="RefSeq" id="WP_003901496.1">
    <property type="nucleotide sequence ID" value="NZ_NVQJ01000015.1"/>
</dbReference>
<dbReference type="SMR" id="P9WQL9"/>
<dbReference type="FunCoup" id="P9WQL9">
    <property type="interactions" value="74"/>
</dbReference>
<dbReference type="STRING" id="83332.Rv2936"/>
<dbReference type="PaxDb" id="83332-Rv2936"/>
<dbReference type="DNASU" id="888168"/>
<dbReference type="GeneID" id="888168"/>
<dbReference type="KEGG" id="mtu:Rv2936"/>
<dbReference type="KEGG" id="mtv:RVBD_2936"/>
<dbReference type="TubercuList" id="Rv2936"/>
<dbReference type="eggNOG" id="COG1131">
    <property type="taxonomic scope" value="Bacteria"/>
</dbReference>
<dbReference type="InParanoid" id="P9WQL9"/>
<dbReference type="OrthoDB" id="9804819at2"/>
<dbReference type="PhylomeDB" id="P9WQL9"/>
<dbReference type="Proteomes" id="UP000001584">
    <property type="component" value="Chromosome"/>
</dbReference>
<dbReference type="GO" id="GO:0009274">
    <property type="term" value="C:peptidoglycan-based cell wall"/>
    <property type="evidence" value="ECO:0007005"/>
    <property type="project" value="MTBBASE"/>
</dbReference>
<dbReference type="GO" id="GO:0005886">
    <property type="term" value="C:plasma membrane"/>
    <property type="evidence" value="ECO:0000314"/>
    <property type="project" value="MTBBASE"/>
</dbReference>
<dbReference type="GO" id="GO:0005524">
    <property type="term" value="F:ATP binding"/>
    <property type="evidence" value="ECO:0000314"/>
    <property type="project" value="MTBBASE"/>
</dbReference>
<dbReference type="GO" id="GO:0016887">
    <property type="term" value="F:ATP hydrolysis activity"/>
    <property type="evidence" value="ECO:0007669"/>
    <property type="project" value="InterPro"/>
</dbReference>
<dbReference type="GO" id="GO:0051701">
    <property type="term" value="P:biological process involved in interaction with host"/>
    <property type="evidence" value="ECO:0000315"/>
    <property type="project" value="MTBBASE"/>
</dbReference>
<dbReference type="GO" id="GO:0043215">
    <property type="term" value="P:daunorubicin transport"/>
    <property type="evidence" value="ECO:0007669"/>
    <property type="project" value="InterPro"/>
</dbReference>
<dbReference type="GO" id="GO:1900753">
    <property type="term" value="P:doxorubicin transport"/>
    <property type="evidence" value="ECO:0007669"/>
    <property type="project" value="InterPro"/>
</dbReference>
<dbReference type="GO" id="GO:0006869">
    <property type="term" value="P:lipid transport"/>
    <property type="evidence" value="ECO:0000315"/>
    <property type="project" value="MTBBASE"/>
</dbReference>
<dbReference type="GO" id="GO:0046677">
    <property type="term" value="P:response to antibiotic"/>
    <property type="evidence" value="ECO:0000314"/>
    <property type="project" value="UniProtKB"/>
</dbReference>
<dbReference type="GO" id="GO:0055085">
    <property type="term" value="P:transmembrane transport"/>
    <property type="evidence" value="ECO:0000314"/>
    <property type="project" value="UniProtKB"/>
</dbReference>
<dbReference type="FunFam" id="3.40.50.300:FF:000589">
    <property type="entry name" value="ABC transporter, ATP-binding subunit"/>
    <property type="match status" value="1"/>
</dbReference>
<dbReference type="Gene3D" id="3.40.50.300">
    <property type="entry name" value="P-loop containing nucleotide triphosphate hydrolases"/>
    <property type="match status" value="1"/>
</dbReference>
<dbReference type="InterPro" id="IPR003593">
    <property type="entry name" value="AAA+_ATPase"/>
</dbReference>
<dbReference type="InterPro" id="IPR003439">
    <property type="entry name" value="ABC_transporter-like_ATP-bd"/>
</dbReference>
<dbReference type="InterPro" id="IPR017871">
    <property type="entry name" value="ABC_transporter-like_CS"/>
</dbReference>
<dbReference type="InterPro" id="IPR050763">
    <property type="entry name" value="ABC_transporter_ATP-binding"/>
</dbReference>
<dbReference type="InterPro" id="IPR005894">
    <property type="entry name" value="DrrA"/>
</dbReference>
<dbReference type="InterPro" id="IPR027417">
    <property type="entry name" value="P-loop_NTPase"/>
</dbReference>
<dbReference type="NCBIfam" id="TIGR01188">
    <property type="entry name" value="drrA"/>
    <property type="match status" value="1"/>
</dbReference>
<dbReference type="PANTHER" id="PTHR42711">
    <property type="entry name" value="ABC TRANSPORTER ATP-BINDING PROTEIN"/>
    <property type="match status" value="1"/>
</dbReference>
<dbReference type="PANTHER" id="PTHR42711:SF19">
    <property type="entry name" value="DOXORUBICIN RESISTANCE ATP-BINDING PROTEIN DRRA"/>
    <property type="match status" value="1"/>
</dbReference>
<dbReference type="Pfam" id="PF00005">
    <property type="entry name" value="ABC_tran"/>
    <property type="match status" value="1"/>
</dbReference>
<dbReference type="SMART" id="SM00382">
    <property type="entry name" value="AAA"/>
    <property type="match status" value="1"/>
</dbReference>
<dbReference type="SUPFAM" id="SSF52540">
    <property type="entry name" value="P-loop containing nucleoside triphosphate hydrolases"/>
    <property type="match status" value="1"/>
</dbReference>
<dbReference type="PROSITE" id="PS00211">
    <property type="entry name" value="ABC_TRANSPORTER_1"/>
    <property type="match status" value="1"/>
</dbReference>
<dbReference type="PROSITE" id="PS50893">
    <property type="entry name" value="ABC_TRANSPORTER_2"/>
    <property type="match status" value="1"/>
</dbReference>
<proteinExistence type="evidence at protein level"/>
<gene>
    <name type="primary">drrA</name>
    <name type="ordered locus">Rv2936</name>
</gene>